<name>R4RL2_HUMAN</name>
<comment type="function">
    <text evidence="1 2 9">Cell surface receptor that plays a functionally redundant role in the inhibition of neurite outgrowth mediated by MAG (By similarity). Plays a functionally redundant role in postnatal brain development. Contributes to normal axon migration across the brain midline and normal formation of the corpus callosum. Does not seem to play a significant role in regulating axon regeneration in the adult central nervous system. Protects motoneurons against apoptosis; protection against apoptosis is probably mediated by MAG (By similarity). Like other family members, plays a role in restricting the number dendritic spines and the number of synapses that are formed during brain development (PubMed:22325200). Signaling mediates activation of Rho and downstream reorganization of the actin cytoskeleton (PubMed:22325200).</text>
</comment>
<comment type="subunit">
    <text evidence="2 6 12">Interaction with MAG is controversial, and may be indirect (Probable). Does not interact with MAG, OMG and RTN4 (PubMed:12839991). Interacts with MAG (By similarity).</text>
</comment>
<comment type="subcellular location">
    <subcellularLocation>
        <location evidence="5 6">Cell membrane</location>
        <topology evidence="5">Lipid-anchor</topology>
        <topology evidence="5">GPI-anchor</topology>
    </subcellularLocation>
    <subcellularLocation>
        <location evidence="5">Membrane raft</location>
    </subcellularLocation>
    <subcellularLocation>
        <location evidence="1">Cell projection</location>
        <location evidence="1">Dendrite</location>
    </subcellularLocation>
    <subcellularLocation>
        <location evidence="2">Perikaryon</location>
    </subcellularLocation>
    <subcellularLocation>
        <location evidence="2">Cell projection</location>
        <location evidence="2">Axon</location>
    </subcellularLocation>
    <text evidence="1">Localized to the surface of neurons, including axons. Detected close to synapses, but is excluded from synapses.</text>
</comment>
<comment type="alternative products">
    <event type="alternative splicing"/>
    <isoform>
        <id>Q86UN3-1</id>
        <name>1</name>
        <sequence type="displayed"/>
    </isoform>
    <isoform>
        <id>Q86UN3-2</id>
        <name>2</name>
        <sequence type="described" ref="VSP_047767 VSP_047768"/>
    </isoform>
</comment>
<comment type="tissue specificity">
    <text evidence="5 7">Highly expressed in brain and liver. Expressed at lower levels in kidney, mammary gland, placenta, skeletal muscle, spleen and thyroid.</text>
</comment>
<comment type="PTM">
    <text evidence="8">Undergoes zinc metalloproteinase-mediated ectodomain shedding in neuroblastoma cells; is released both as a full-length ectodomain and an N-terminal fragment containing the leucine-rich repeat (LRR) region of the protein.</text>
</comment>
<comment type="PTM">
    <text evidence="8">N-glycosylated.</text>
</comment>
<comment type="similarity">
    <text evidence="12">Belongs to the Nogo receptor family.</text>
</comment>
<feature type="signal peptide" evidence="3">
    <location>
        <begin position="1"/>
        <end position="46"/>
    </location>
</feature>
<feature type="chain" id="PRO_0000046048" description="Reticulon-4 receptor-like 2">
    <location>
        <begin position="47"/>
        <end position="390"/>
    </location>
</feature>
<feature type="propeptide" id="PRO_0000046049" description="Removed in mature form" evidence="3">
    <location>
        <begin position="391"/>
        <end position="420"/>
    </location>
</feature>
<feature type="domain" description="LRRNT">
    <location>
        <begin position="47"/>
        <end position="60"/>
    </location>
</feature>
<feature type="repeat" description="LRR 1">
    <location>
        <begin position="61"/>
        <end position="82"/>
    </location>
</feature>
<feature type="repeat" description="LRR 2">
    <location>
        <begin position="83"/>
        <end position="104"/>
    </location>
</feature>
<feature type="repeat" description="LRR 3">
    <location>
        <begin position="107"/>
        <end position="129"/>
    </location>
</feature>
<feature type="repeat" description="LRR 4">
    <location>
        <begin position="132"/>
        <end position="153"/>
    </location>
</feature>
<feature type="repeat" description="LRR 5">
    <location>
        <begin position="156"/>
        <end position="177"/>
    </location>
</feature>
<feature type="repeat" description="LRR 6">
    <location>
        <begin position="180"/>
        <end position="201"/>
    </location>
</feature>
<feature type="repeat" description="LRR 7">
    <location>
        <begin position="204"/>
        <end position="225"/>
    </location>
</feature>
<feature type="repeat" description="LRR 8">
    <location>
        <begin position="228"/>
        <end position="249"/>
    </location>
</feature>
<feature type="domain" description="LRRCT">
    <location>
        <begin position="261"/>
        <end position="312"/>
    </location>
</feature>
<feature type="region of interest" description="Disordered" evidence="4">
    <location>
        <begin position="308"/>
        <end position="399"/>
    </location>
</feature>
<feature type="region of interest" description="Important for interaction with MAG" evidence="2">
    <location>
        <begin position="315"/>
        <end position="327"/>
    </location>
</feature>
<feature type="compositionally biased region" description="Basic and acidic residues" evidence="4">
    <location>
        <begin position="351"/>
        <end position="360"/>
    </location>
</feature>
<feature type="lipid moiety-binding region" description="GPI-anchor amidated cysteine" evidence="3">
    <location>
        <position position="390"/>
    </location>
</feature>
<feature type="glycosylation site" description="N-linked (GlcNAc...) asparagine" evidence="2">
    <location>
        <position position="50"/>
    </location>
</feature>
<feature type="glycosylation site" description="N-linked (GlcNAc...) asparagine" evidence="2">
    <location>
        <position position="93"/>
    </location>
</feature>
<feature type="glycosylation site" description="N-linked (GlcNAc...) asparagine" evidence="2">
    <location>
        <position position="236"/>
    </location>
</feature>
<feature type="disulfide bond" evidence="2">
    <location>
        <begin position="31"/>
        <end position="37"/>
    </location>
</feature>
<feature type="disulfide bond" evidence="2">
    <location>
        <begin position="35"/>
        <end position="46"/>
    </location>
</feature>
<feature type="disulfide bond" evidence="2">
    <location>
        <begin position="265"/>
        <end position="288"/>
    </location>
</feature>
<feature type="disulfide bond" evidence="2">
    <location>
        <begin position="267"/>
        <end position="310"/>
    </location>
</feature>
<feature type="splice variant" id="VSP_047767" description="In isoform 2." evidence="11">
    <original>DDLFADLANLSHLFLHGNRLRL</original>
    <variation>GPLPKGLCSCFSHPPSSLPTSR</variation>
    <location>
        <begin position="172"/>
        <end position="193"/>
    </location>
</feature>
<feature type="splice variant" id="VSP_047768" description="In isoform 2." evidence="11">
    <location>
        <begin position="194"/>
        <end position="420"/>
    </location>
</feature>
<feature type="sequence conflict" description="In Ref. 2; AAP82838." evidence="12" ref="2">
    <original>G</original>
    <variation>S</variation>
    <location>
        <position position="78"/>
    </location>
</feature>
<reference evidence="12 13" key="1">
    <citation type="journal article" date="2003" name="J. Neurochem.">
        <title>Characterization of two novel proteins, NgRH1 and NgRH2, structurally and biochemically homologous to the Nogo-66 receptor.</title>
        <authorList>
            <person name="Pignot V."/>
            <person name="Hein A.E."/>
            <person name="Barske C."/>
            <person name="Wiessner C."/>
            <person name="Walmsley A.R."/>
            <person name="Kaupmann K."/>
            <person name="Mayeur H."/>
            <person name="Sommer B."/>
            <person name="Mir A.K."/>
            <person name="Frentzel S."/>
        </authorList>
    </citation>
    <scope>NUCLEOTIDE SEQUENCE [MRNA] (ISOFORM 1)</scope>
    <scope>SUBCELLULAR LOCATION</scope>
    <scope>TISSUE SPECIFICITY</scope>
    <source>
        <tissue evidence="5">Brain</tissue>
    </source>
</reference>
<reference evidence="12 14" key="2">
    <citation type="journal article" date="2003" name="Mol. Cell. Neurosci.">
        <title>Two novel mammalian nogo receptor homologs differentially expressed in the central and peripheral nervous systems.</title>
        <authorList>
            <person name="Lauren J."/>
            <person name="Airaksinen M.S."/>
            <person name="Saarma M."/>
            <person name="Timmusk T."/>
        </authorList>
    </citation>
    <scope>NUCLEOTIDE SEQUENCE [MRNA] (ISOFORM 1)</scope>
    <scope>TISSUE SPECIFICITY</scope>
</reference>
<reference evidence="12" key="3">
    <citation type="submission" date="2006-07" db="EMBL/GenBank/DDBJ databases">
        <title>Splice variant of human RTN4RL2 (Nogo-66 receptor homolog NgR2).</title>
        <authorList>
            <person name="Rader C."/>
            <person name="Hofer T."/>
            <person name="Giger R.J."/>
        </authorList>
    </citation>
    <scope>NUCLEOTIDE SEQUENCE [MRNA] (ISOFORM 2)</scope>
    <scope>ALTERNATIVE SPLICING</scope>
</reference>
<reference key="4">
    <citation type="journal article" date="2006" name="Nature">
        <title>Human chromosome 11 DNA sequence and analysis including novel gene identification.</title>
        <authorList>
            <person name="Taylor T.D."/>
            <person name="Noguchi H."/>
            <person name="Totoki Y."/>
            <person name="Toyoda A."/>
            <person name="Kuroki Y."/>
            <person name="Dewar K."/>
            <person name="Lloyd C."/>
            <person name="Itoh T."/>
            <person name="Takeda T."/>
            <person name="Kim D.-W."/>
            <person name="She X."/>
            <person name="Barlow K.F."/>
            <person name="Bloom T."/>
            <person name="Bruford E."/>
            <person name="Chang J.L."/>
            <person name="Cuomo C.A."/>
            <person name="Eichler E."/>
            <person name="FitzGerald M.G."/>
            <person name="Jaffe D.B."/>
            <person name="LaButti K."/>
            <person name="Nicol R."/>
            <person name="Park H.-S."/>
            <person name="Seaman C."/>
            <person name="Sougnez C."/>
            <person name="Yang X."/>
            <person name="Zimmer A.R."/>
            <person name="Zody M.C."/>
            <person name="Birren B.W."/>
            <person name="Nusbaum C."/>
            <person name="Fujiyama A."/>
            <person name="Hattori M."/>
            <person name="Rogers J."/>
            <person name="Lander E.S."/>
            <person name="Sakaki Y."/>
        </authorList>
    </citation>
    <scope>NUCLEOTIDE SEQUENCE [LARGE SCALE GENOMIC DNA]</scope>
</reference>
<reference key="5">
    <citation type="journal article" date="2004" name="Genome Res.">
        <title>The status, quality, and expansion of the NIH full-length cDNA project: the Mammalian Gene Collection (MGC).</title>
        <authorList>
            <consortium name="The MGC Project Team"/>
        </authorList>
    </citation>
    <scope>NUCLEOTIDE SEQUENCE [LARGE SCALE MRNA] (ISOFORM 1)</scope>
</reference>
<reference evidence="15" key="6">
    <citation type="journal article" date="2003" name="EMBO J.">
        <title>Structure and axon outgrowth inhibitor binding of the Nogo-66 receptor and related proteins.</title>
        <authorList>
            <person name="Barton W.A."/>
            <person name="Liu B.P."/>
            <person name="Tzvetkova D."/>
            <person name="Jeffrey P.D."/>
            <person name="Fournier A.E."/>
            <person name="Sah D."/>
            <person name="Cate R."/>
            <person name="Strittmatter S.M."/>
            <person name="Nikolov D.B."/>
        </authorList>
    </citation>
    <scope>IDENTIFICATION</scope>
    <scope>SUBCELLULAR LOCATION</scope>
    <scope>LACK OF INTERACTION WITH MAG; OMG AND RTN4</scope>
</reference>
<reference key="7">
    <citation type="journal article" date="2005" name="Biochem. Biophys. Res. Commun.">
        <title>Ectodomain shedding of human Nogo-66 receptor homologue-1 by zinc metalloproteinases.</title>
        <authorList>
            <person name="Walmsley A.R."/>
            <person name="Mir A.K."/>
            <person name="Frentzel S."/>
        </authorList>
    </citation>
    <scope>SUBCELLULAR LOCATION</scope>
    <scope>PROTEOLYTIC CLEAVAGE</scope>
    <scope>GLYCOSYLATION</scope>
</reference>
<reference key="8">
    <citation type="journal article" date="2012" name="Neuron">
        <title>The Nogo receptor family restricts synapse number in the developing hippocampus.</title>
        <authorList>
            <person name="Wills Z.P."/>
            <person name="Mandel-Brehm C."/>
            <person name="Mardinly A.R."/>
            <person name="McCord A.E."/>
            <person name="Giger R.J."/>
            <person name="Greenberg M.E."/>
        </authorList>
    </citation>
    <scope>FUNCTION</scope>
</reference>
<evidence type="ECO:0000250" key="1">
    <source>
        <dbReference type="UniProtKB" id="Q7M6Z0"/>
    </source>
</evidence>
<evidence type="ECO:0000250" key="2">
    <source>
        <dbReference type="UniProtKB" id="Q80WD1"/>
    </source>
</evidence>
<evidence type="ECO:0000255" key="3"/>
<evidence type="ECO:0000256" key="4">
    <source>
        <dbReference type="SAM" id="MobiDB-lite"/>
    </source>
</evidence>
<evidence type="ECO:0000269" key="5">
    <source>
    </source>
</evidence>
<evidence type="ECO:0000269" key="6">
    <source>
    </source>
</evidence>
<evidence type="ECO:0000269" key="7">
    <source>
    </source>
</evidence>
<evidence type="ECO:0000269" key="8">
    <source>
    </source>
</evidence>
<evidence type="ECO:0000269" key="9">
    <source>
    </source>
</evidence>
<evidence type="ECO:0000303" key="10">
    <source>
    </source>
</evidence>
<evidence type="ECO:0000303" key="11">
    <source ref="3"/>
</evidence>
<evidence type="ECO:0000305" key="12"/>
<evidence type="ECO:0000312" key="13">
    <source>
        <dbReference type="EMBL" id="AAP21835.1"/>
    </source>
</evidence>
<evidence type="ECO:0000312" key="14">
    <source>
        <dbReference type="EMBL" id="AAP82838.1"/>
    </source>
</evidence>
<evidence type="ECO:0000312" key="15">
    <source>
        <dbReference type="EMBL" id="DAA01385.1"/>
    </source>
</evidence>
<evidence type="ECO:0000312" key="16">
    <source>
        <dbReference type="HGNC" id="HGNC:23053"/>
    </source>
</evidence>
<sequence>MLPGLRRLLQAPASACLLLMLLALPLAAPSCPMLCTCYSSPPTVSCQANNFSSVPLSLPPSTQRLFLQNNLIRTLRPGTFGSNLLTLWLFSNNLSTIYPGTFRHLQALEELDLGDNRHLRSLEPDTFQGLERLQSLHLYRCQLSSLPGNIFRGLVSLQYLYLQENSLLHLQDDLFADLANLSHLFLHGNRLRLLTEHVFRGLGSLDRLLLHGNRLQGVHRAAFRGLSRLTILYLFNNSLASLPGEALADLPSLEFLRLNANPWACDCRARPLWAWFQRARVSSSDVTCATPPERQGRDLRALREADFQACPPAAPTRPGSRARGNSSSNHLYGVAEAGAPPADPSTLYRDLPAEDSRGRQGGDAPTEDDYWGGYGGEDQRGEQMCPGAACQAPPDSRGPALSAGLPSPLLCLLLLVPHHL</sequence>
<organism>
    <name type="scientific">Homo sapiens</name>
    <name type="common">Human</name>
    <dbReference type="NCBI Taxonomy" id="9606"/>
    <lineage>
        <taxon>Eukaryota</taxon>
        <taxon>Metazoa</taxon>
        <taxon>Chordata</taxon>
        <taxon>Craniata</taxon>
        <taxon>Vertebrata</taxon>
        <taxon>Euteleostomi</taxon>
        <taxon>Mammalia</taxon>
        <taxon>Eutheria</taxon>
        <taxon>Euarchontoglires</taxon>
        <taxon>Primates</taxon>
        <taxon>Haplorrhini</taxon>
        <taxon>Catarrhini</taxon>
        <taxon>Hominidae</taxon>
        <taxon>Homo</taxon>
    </lineage>
</organism>
<keyword id="KW-0025">Alternative splicing</keyword>
<keyword id="KW-1003">Cell membrane</keyword>
<keyword id="KW-0966">Cell projection</keyword>
<keyword id="KW-1015">Disulfide bond</keyword>
<keyword id="KW-0325">Glycoprotein</keyword>
<keyword id="KW-0336">GPI-anchor</keyword>
<keyword id="KW-0433">Leucine-rich repeat</keyword>
<keyword id="KW-0449">Lipoprotein</keyword>
<keyword id="KW-0472">Membrane</keyword>
<keyword id="KW-1267">Proteomics identification</keyword>
<keyword id="KW-0675">Receptor</keyword>
<keyword id="KW-1185">Reference proteome</keyword>
<keyword id="KW-0677">Repeat</keyword>
<keyword id="KW-0732">Signal</keyword>
<accession>Q86UN3</accession>
<accession>Q0GGW3</accession>
<accession>Q17RL9</accession>
<accession>Q6X813</accession>
<dbReference type="EMBL" id="AF532858">
    <property type="protein sequence ID" value="AAP21835.1"/>
    <property type="molecule type" value="mRNA"/>
</dbReference>
<dbReference type="EMBL" id="AY250221">
    <property type="protein sequence ID" value="AAP82838.1"/>
    <property type="molecule type" value="mRNA"/>
</dbReference>
<dbReference type="EMBL" id="DQ864979">
    <property type="protein sequence ID" value="ABI23432.1"/>
    <property type="molecule type" value="mRNA"/>
</dbReference>
<dbReference type="EMBL" id="AP002893">
    <property type="status" value="NOT_ANNOTATED_CDS"/>
    <property type="molecule type" value="Genomic_DNA"/>
</dbReference>
<dbReference type="EMBL" id="BC113673">
    <property type="protein sequence ID" value="AAI13674.1"/>
    <property type="molecule type" value="mRNA"/>
</dbReference>
<dbReference type="EMBL" id="BC117276">
    <property type="protein sequence ID" value="AAI17277.1"/>
    <property type="molecule type" value="mRNA"/>
</dbReference>
<dbReference type="EMBL" id="BK001302">
    <property type="protein sequence ID" value="DAA01385.1"/>
    <property type="molecule type" value="mRNA"/>
</dbReference>
<dbReference type="CCDS" id="CCDS7957.1">
    <molecule id="Q86UN3-1"/>
</dbReference>
<dbReference type="RefSeq" id="NP_848665.1">
    <molecule id="Q86UN3-1"/>
    <property type="nucleotide sequence ID" value="NM_178570.3"/>
</dbReference>
<dbReference type="SMR" id="Q86UN3"/>
<dbReference type="BioGRID" id="131566">
    <property type="interactions" value="19"/>
</dbReference>
<dbReference type="FunCoup" id="Q86UN3">
    <property type="interactions" value="136"/>
</dbReference>
<dbReference type="IntAct" id="Q86UN3">
    <property type="interactions" value="10"/>
</dbReference>
<dbReference type="MINT" id="Q86UN3"/>
<dbReference type="STRING" id="9606.ENSP00000335397"/>
<dbReference type="GlyCosmos" id="Q86UN3">
    <property type="glycosylation" value="3 sites, No reported glycans"/>
</dbReference>
<dbReference type="GlyGen" id="Q86UN3">
    <property type="glycosylation" value="7 sites, 4 N-linked glycans (2 sites), 1 O-linked glycan (2 sites)"/>
</dbReference>
<dbReference type="iPTMnet" id="Q86UN3"/>
<dbReference type="PhosphoSitePlus" id="Q86UN3"/>
<dbReference type="BioMuta" id="RTN4RL2"/>
<dbReference type="DMDM" id="74759401"/>
<dbReference type="jPOST" id="Q86UN3"/>
<dbReference type="MassIVE" id="Q86UN3"/>
<dbReference type="PaxDb" id="9606-ENSP00000335397"/>
<dbReference type="PeptideAtlas" id="Q86UN3"/>
<dbReference type="ProteomicsDB" id="58756"/>
<dbReference type="ProteomicsDB" id="69834">
    <molecule id="Q86UN3-1"/>
</dbReference>
<dbReference type="ABCD" id="Q86UN3">
    <property type="antibodies" value="1 sequenced antibody"/>
</dbReference>
<dbReference type="Antibodypedia" id="62766">
    <property type="antibodies" value="148 antibodies from 23 providers"/>
</dbReference>
<dbReference type="DNASU" id="349667"/>
<dbReference type="Ensembl" id="ENST00000335099.8">
    <molecule id="Q86UN3-1"/>
    <property type="protein sequence ID" value="ENSP00000335397.3"/>
    <property type="gene ID" value="ENSG00000186907.8"/>
</dbReference>
<dbReference type="Ensembl" id="ENST00000395120.2">
    <molecule id="Q86UN3-2"/>
    <property type="protein sequence ID" value="ENSP00000378552.2"/>
    <property type="gene ID" value="ENSG00000186907.8"/>
</dbReference>
<dbReference type="GeneID" id="349667"/>
<dbReference type="KEGG" id="hsa:349667"/>
<dbReference type="MANE-Select" id="ENST00000335099.8">
    <property type="protein sequence ID" value="ENSP00000335397.3"/>
    <property type="RefSeq nucleotide sequence ID" value="NM_178570.3"/>
    <property type="RefSeq protein sequence ID" value="NP_848665.1"/>
</dbReference>
<dbReference type="UCSC" id="uc010rjt.4">
    <molecule id="Q86UN3-1"/>
    <property type="organism name" value="human"/>
</dbReference>
<dbReference type="AGR" id="HGNC:23053"/>
<dbReference type="CTD" id="349667"/>
<dbReference type="DisGeNET" id="349667"/>
<dbReference type="GeneCards" id="RTN4RL2"/>
<dbReference type="HGNC" id="HGNC:23053">
    <property type="gene designation" value="RTN4RL2"/>
</dbReference>
<dbReference type="HPA" id="ENSG00000186907">
    <property type="expression patterns" value="Group enriched (brain, liver, thyroid gland)"/>
</dbReference>
<dbReference type="MIM" id="610462">
    <property type="type" value="gene"/>
</dbReference>
<dbReference type="neXtProt" id="NX_Q86UN3"/>
<dbReference type="OpenTargets" id="ENSG00000186907"/>
<dbReference type="PharmGKB" id="PA134964131"/>
<dbReference type="VEuPathDB" id="HostDB:ENSG00000186907"/>
<dbReference type="eggNOG" id="KOG0619">
    <property type="taxonomic scope" value="Eukaryota"/>
</dbReference>
<dbReference type="GeneTree" id="ENSGT00940000158505"/>
<dbReference type="HOGENOM" id="CLU_000288_18_6_1"/>
<dbReference type="InParanoid" id="Q86UN3"/>
<dbReference type="OMA" id="NDNPWAC"/>
<dbReference type="OrthoDB" id="6363818at2759"/>
<dbReference type="PAN-GO" id="Q86UN3">
    <property type="GO annotations" value="3 GO annotations based on evolutionary models"/>
</dbReference>
<dbReference type="PhylomeDB" id="Q86UN3"/>
<dbReference type="TreeFam" id="TF330080"/>
<dbReference type="PathwayCommons" id="Q86UN3"/>
<dbReference type="Reactome" id="R-HSA-163125">
    <property type="pathway name" value="Post-translational modification: synthesis of GPI-anchored proteins"/>
</dbReference>
<dbReference type="SignaLink" id="Q86UN3"/>
<dbReference type="BioGRID-ORCS" id="349667">
    <property type="hits" value="14 hits in 1148 CRISPR screens"/>
</dbReference>
<dbReference type="CD-CODE" id="FB4E32DD">
    <property type="entry name" value="Presynaptic clusters and postsynaptic densities"/>
</dbReference>
<dbReference type="GenomeRNAi" id="349667"/>
<dbReference type="Pharos" id="Q86UN3">
    <property type="development level" value="Tbio"/>
</dbReference>
<dbReference type="PRO" id="PR:Q86UN3"/>
<dbReference type="Proteomes" id="UP000005640">
    <property type="component" value="Chromosome 11"/>
</dbReference>
<dbReference type="RNAct" id="Q86UN3">
    <property type="molecule type" value="protein"/>
</dbReference>
<dbReference type="Bgee" id="ENSG00000186907">
    <property type="expression patterns" value="Expressed in right lobe of liver and 94 other cell types or tissues"/>
</dbReference>
<dbReference type="ExpressionAtlas" id="Q86UN3">
    <property type="expression patterns" value="baseline and differential"/>
</dbReference>
<dbReference type="GO" id="GO:0030424">
    <property type="term" value="C:axon"/>
    <property type="evidence" value="ECO:0000250"/>
    <property type="project" value="UniProtKB"/>
</dbReference>
<dbReference type="GO" id="GO:0009986">
    <property type="term" value="C:cell surface"/>
    <property type="evidence" value="ECO:0000314"/>
    <property type="project" value="DFLAT"/>
</dbReference>
<dbReference type="GO" id="GO:0030425">
    <property type="term" value="C:dendrite"/>
    <property type="evidence" value="ECO:0007669"/>
    <property type="project" value="UniProtKB-SubCell"/>
</dbReference>
<dbReference type="GO" id="GO:0009897">
    <property type="term" value="C:external side of plasma membrane"/>
    <property type="evidence" value="ECO:0000318"/>
    <property type="project" value="GO_Central"/>
</dbReference>
<dbReference type="GO" id="GO:0070062">
    <property type="term" value="C:extracellular exosome"/>
    <property type="evidence" value="ECO:0007005"/>
    <property type="project" value="UniProtKB"/>
</dbReference>
<dbReference type="GO" id="GO:0031012">
    <property type="term" value="C:extracellular matrix"/>
    <property type="evidence" value="ECO:0000318"/>
    <property type="project" value="GO_Central"/>
</dbReference>
<dbReference type="GO" id="GO:0005576">
    <property type="term" value="C:extracellular region"/>
    <property type="evidence" value="ECO:0000304"/>
    <property type="project" value="Reactome"/>
</dbReference>
<dbReference type="GO" id="GO:0005615">
    <property type="term" value="C:extracellular space"/>
    <property type="evidence" value="ECO:0000318"/>
    <property type="project" value="GO_Central"/>
</dbReference>
<dbReference type="GO" id="GO:0045121">
    <property type="term" value="C:membrane raft"/>
    <property type="evidence" value="ECO:0000250"/>
    <property type="project" value="UniProtKB"/>
</dbReference>
<dbReference type="GO" id="GO:0043005">
    <property type="term" value="C:neuron projection"/>
    <property type="evidence" value="ECO:0000250"/>
    <property type="project" value="UniProtKB"/>
</dbReference>
<dbReference type="GO" id="GO:0043204">
    <property type="term" value="C:perikaryon"/>
    <property type="evidence" value="ECO:0000250"/>
    <property type="project" value="UniProtKB"/>
</dbReference>
<dbReference type="GO" id="GO:0005886">
    <property type="term" value="C:plasma membrane"/>
    <property type="evidence" value="ECO:0000314"/>
    <property type="project" value="UniProtKB"/>
</dbReference>
<dbReference type="GO" id="GO:0038023">
    <property type="term" value="F:signaling receptor activity"/>
    <property type="evidence" value="ECO:0000314"/>
    <property type="project" value="UniProtKB"/>
</dbReference>
<dbReference type="GO" id="GO:0031103">
    <property type="term" value="P:axon regeneration"/>
    <property type="evidence" value="ECO:0000304"/>
    <property type="project" value="UniProtKB"/>
</dbReference>
<dbReference type="GO" id="GO:0007166">
    <property type="term" value="P:cell surface receptor signaling pathway"/>
    <property type="evidence" value="ECO:0000250"/>
    <property type="project" value="UniProtKB"/>
</dbReference>
<dbReference type="GO" id="GO:0022038">
    <property type="term" value="P:corpus callosum development"/>
    <property type="evidence" value="ECO:0007669"/>
    <property type="project" value="Ensembl"/>
</dbReference>
<dbReference type="GO" id="GO:0010977">
    <property type="term" value="P:negative regulation of neuron projection development"/>
    <property type="evidence" value="ECO:0000250"/>
    <property type="project" value="UniProtKB"/>
</dbReference>
<dbReference type="FunFam" id="3.80.10.10:FF:000018">
    <property type="entry name" value="Reticulon 4 receptor"/>
    <property type="match status" value="1"/>
</dbReference>
<dbReference type="Gene3D" id="3.80.10.10">
    <property type="entry name" value="Ribonuclease Inhibitor"/>
    <property type="match status" value="1"/>
</dbReference>
<dbReference type="InterPro" id="IPR000483">
    <property type="entry name" value="Cys-rich_flank_reg_C"/>
</dbReference>
<dbReference type="InterPro" id="IPR001611">
    <property type="entry name" value="Leu-rich_rpt"/>
</dbReference>
<dbReference type="InterPro" id="IPR003591">
    <property type="entry name" value="Leu-rich_rpt_typical-subtyp"/>
</dbReference>
<dbReference type="InterPro" id="IPR032675">
    <property type="entry name" value="LRR_dom_sf"/>
</dbReference>
<dbReference type="InterPro" id="IPR050541">
    <property type="entry name" value="LRR_TM_domain-containing"/>
</dbReference>
<dbReference type="PANTHER" id="PTHR24369">
    <property type="entry name" value="ANTIGEN BSP, PUTATIVE-RELATED"/>
    <property type="match status" value="1"/>
</dbReference>
<dbReference type="PANTHER" id="PTHR24369:SF196">
    <property type="entry name" value="RETICULON 4 RECEPTOR LIKE 1"/>
    <property type="match status" value="1"/>
</dbReference>
<dbReference type="Pfam" id="PF13855">
    <property type="entry name" value="LRR_8"/>
    <property type="match status" value="2"/>
</dbReference>
<dbReference type="SMART" id="SM00369">
    <property type="entry name" value="LRR_TYP"/>
    <property type="match status" value="8"/>
</dbReference>
<dbReference type="SMART" id="SM00082">
    <property type="entry name" value="LRRCT"/>
    <property type="match status" value="1"/>
</dbReference>
<dbReference type="SUPFAM" id="SSF52058">
    <property type="entry name" value="L domain-like"/>
    <property type="match status" value="1"/>
</dbReference>
<protein>
    <recommendedName>
        <fullName>Reticulon-4 receptor-like 2</fullName>
    </recommendedName>
    <alternativeName>
        <fullName>Nogo receptor-like 3</fullName>
    </alternativeName>
    <alternativeName>
        <fullName evidence="10">Nogo-66 receptor homolog 1</fullName>
    </alternativeName>
    <alternativeName>
        <fullName>Nogo-66 receptor-related protein 2</fullName>
        <shortName>NgR2</shortName>
    </alternativeName>
</protein>
<proteinExistence type="evidence at protein level"/>
<gene>
    <name evidence="16" type="primary">RTN4RL2</name>
    <name evidence="10 13" type="synonym">NGRH1</name>
    <name evidence="14" type="synonym">NGRL3</name>
</gene>